<sequence>MANFVLNATARNEDKQGKGASRRLRREALVPAIIYGGEAEPVAVTIELRELVKALENNAFFEEVVEVKVGDKVENVKIQALQRHPAKNTPMHADFKRA</sequence>
<proteinExistence type="inferred from homology"/>
<comment type="function">
    <text evidence="1">This is one of the proteins that binds to the 5S RNA in the ribosome where it forms part of the central protuberance.</text>
</comment>
<comment type="subunit">
    <text evidence="1">Part of the 50S ribosomal subunit; part of the 5S rRNA/L5/L18/L25 subcomplex. Contacts the 5S rRNA. Binds to the 5S rRNA independently of L5 and L18.</text>
</comment>
<comment type="similarity">
    <text evidence="1">Belongs to the bacterial ribosomal protein bL25 family.</text>
</comment>
<comment type="sequence caution" evidence="3">
    <conflict type="erroneous initiation">
        <sequence resource="EMBL-CDS" id="CAG69627"/>
    </conflict>
</comment>
<feature type="chain" id="PRO_0000181470" description="Large ribosomal subunit protein bL25">
    <location>
        <begin position="1"/>
        <end position="98"/>
    </location>
</feature>
<feature type="region of interest" description="Disordered" evidence="2">
    <location>
        <begin position="1"/>
        <end position="22"/>
    </location>
</feature>
<dbReference type="EMBL" id="CR543861">
    <property type="protein sequence ID" value="CAG69627.1"/>
    <property type="status" value="ALT_INIT"/>
    <property type="molecule type" value="Genomic_DNA"/>
</dbReference>
<dbReference type="RefSeq" id="WP_004929448.1">
    <property type="nucleotide sequence ID" value="NC_005966.1"/>
</dbReference>
<dbReference type="SMR" id="Q6F8I8"/>
<dbReference type="STRING" id="202950.GCA_001485005_02898"/>
<dbReference type="GeneID" id="45235142"/>
<dbReference type="KEGG" id="aci:ACIAD2908"/>
<dbReference type="eggNOG" id="COG1825">
    <property type="taxonomic scope" value="Bacteria"/>
</dbReference>
<dbReference type="HOGENOM" id="CLU_137946_0_0_6"/>
<dbReference type="OrthoDB" id="9806411at2"/>
<dbReference type="BioCyc" id="ASP62977:ACIAD_RS13135-MONOMER"/>
<dbReference type="Proteomes" id="UP000000430">
    <property type="component" value="Chromosome"/>
</dbReference>
<dbReference type="GO" id="GO:0022625">
    <property type="term" value="C:cytosolic large ribosomal subunit"/>
    <property type="evidence" value="ECO:0007669"/>
    <property type="project" value="TreeGrafter"/>
</dbReference>
<dbReference type="GO" id="GO:0008097">
    <property type="term" value="F:5S rRNA binding"/>
    <property type="evidence" value="ECO:0007669"/>
    <property type="project" value="InterPro"/>
</dbReference>
<dbReference type="GO" id="GO:0003735">
    <property type="term" value="F:structural constituent of ribosome"/>
    <property type="evidence" value="ECO:0007669"/>
    <property type="project" value="InterPro"/>
</dbReference>
<dbReference type="GO" id="GO:0006412">
    <property type="term" value="P:translation"/>
    <property type="evidence" value="ECO:0007669"/>
    <property type="project" value="UniProtKB-UniRule"/>
</dbReference>
<dbReference type="CDD" id="cd00495">
    <property type="entry name" value="Ribosomal_L25_TL5_CTC"/>
    <property type="match status" value="1"/>
</dbReference>
<dbReference type="Gene3D" id="2.40.240.10">
    <property type="entry name" value="Ribosomal Protein L25, Chain P"/>
    <property type="match status" value="1"/>
</dbReference>
<dbReference type="HAMAP" id="MF_01336">
    <property type="entry name" value="Ribosomal_bL25"/>
    <property type="match status" value="1"/>
</dbReference>
<dbReference type="InterPro" id="IPR020056">
    <property type="entry name" value="Rbsml_bL25/Gln-tRNA_synth_N"/>
</dbReference>
<dbReference type="InterPro" id="IPR011035">
    <property type="entry name" value="Ribosomal_bL25/Gln-tRNA_synth"/>
</dbReference>
<dbReference type="InterPro" id="IPR020055">
    <property type="entry name" value="Ribosomal_bL25_short"/>
</dbReference>
<dbReference type="InterPro" id="IPR029751">
    <property type="entry name" value="Ribosomal_L25_dom"/>
</dbReference>
<dbReference type="InterPro" id="IPR020930">
    <property type="entry name" value="Ribosomal_uL5_bac-type"/>
</dbReference>
<dbReference type="NCBIfam" id="NF004612">
    <property type="entry name" value="PRK05943.1"/>
    <property type="match status" value="1"/>
</dbReference>
<dbReference type="PANTHER" id="PTHR33284">
    <property type="entry name" value="RIBOSOMAL PROTEIN L25/GLN-TRNA SYNTHETASE, ANTI-CODON-BINDING DOMAIN-CONTAINING PROTEIN"/>
    <property type="match status" value="1"/>
</dbReference>
<dbReference type="PANTHER" id="PTHR33284:SF1">
    <property type="entry name" value="RIBOSOMAL PROTEIN L25_GLN-TRNA SYNTHETASE, ANTI-CODON-BINDING DOMAIN-CONTAINING PROTEIN"/>
    <property type="match status" value="1"/>
</dbReference>
<dbReference type="Pfam" id="PF01386">
    <property type="entry name" value="Ribosomal_L25p"/>
    <property type="match status" value="1"/>
</dbReference>
<dbReference type="SUPFAM" id="SSF50715">
    <property type="entry name" value="Ribosomal protein L25-like"/>
    <property type="match status" value="1"/>
</dbReference>
<reference key="1">
    <citation type="journal article" date="2004" name="Nucleic Acids Res.">
        <title>Unique features revealed by the genome sequence of Acinetobacter sp. ADP1, a versatile and naturally transformation competent bacterium.</title>
        <authorList>
            <person name="Barbe V."/>
            <person name="Vallenet D."/>
            <person name="Fonknechten N."/>
            <person name="Kreimeyer A."/>
            <person name="Oztas S."/>
            <person name="Labarre L."/>
            <person name="Cruveiller S."/>
            <person name="Robert C."/>
            <person name="Duprat S."/>
            <person name="Wincker P."/>
            <person name="Ornston L.N."/>
            <person name="Weissenbach J."/>
            <person name="Marliere P."/>
            <person name="Cohen G.N."/>
            <person name="Medigue C."/>
        </authorList>
    </citation>
    <scope>NUCLEOTIDE SEQUENCE [LARGE SCALE GENOMIC DNA]</scope>
    <source>
        <strain>ATCC 33305 / BD413 / ADP1</strain>
    </source>
</reference>
<evidence type="ECO:0000255" key="1">
    <source>
        <dbReference type="HAMAP-Rule" id="MF_01336"/>
    </source>
</evidence>
<evidence type="ECO:0000256" key="2">
    <source>
        <dbReference type="SAM" id="MobiDB-lite"/>
    </source>
</evidence>
<evidence type="ECO:0000305" key="3"/>
<protein>
    <recommendedName>
        <fullName evidence="1">Large ribosomal subunit protein bL25</fullName>
    </recommendedName>
    <alternativeName>
        <fullName evidence="3">50S ribosomal protein L25</fullName>
    </alternativeName>
</protein>
<keyword id="KW-0687">Ribonucleoprotein</keyword>
<keyword id="KW-0689">Ribosomal protein</keyword>
<keyword id="KW-0694">RNA-binding</keyword>
<keyword id="KW-0699">rRNA-binding</keyword>
<name>RL25_ACIAD</name>
<accession>Q6F8I8</accession>
<organism>
    <name type="scientific">Acinetobacter baylyi (strain ATCC 33305 / BD413 / ADP1)</name>
    <dbReference type="NCBI Taxonomy" id="62977"/>
    <lineage>
        <taxon>Bacteria</taxon>
        <taxon>Pseudomonadati</taxon>
        <taxon>Pseudomonadota</taxon>
        <taxon>Gammaproteobacteria</taxon>
        <taxon>Moraxellales</taxon>
        <taxon>Moraxellaceae</taxon>
        <taxon>Acinetobacter</taxon>
    </lineage>
</organism>
<gene>
    <name evidence="1" type="primary">rplY</name>
    <name type="ordered locus">ACIAD2908</name>
</gene>